<evidence type="ECO:0000255" key="1">
    <source>
        <dbReference type="HAMAP-Rule" id="MF_01637"/>
    </source>
</evidence>
<proteinExistence type="inferred from homology"/>
<protein>
    <recommendedName>
        <fullName evidence="1">Fe/S biogenesis protein NfuA</fullName>
    </recommendedName>
</protein>
<sequence length="194" mass="20970">MSAITITDAAHDYLADLLSKQNTPGIGIRIFITQPGTQYAETCIAYCKPGEEKPDDTAVGLKSFTAYLDAVSVPFLEDALVDYATDRMGGQLTIKAPNAKVPMVNEDSPINERINYYLQTEINPGLASHGGQVSLVDVVDDGIAVLQFGGGCQGCGQADVTLKEGIERTLLERIPELKGVRDVTDHTQKENAYY</sequence>
<name>NFUA_PSEPG</name>
<gene>
    <name evidence="1" type="primary">nfuA</name>
    <name type="ordered locus">PputGB1_1985</name>
</gene>
<comment type="function">
    <text evidence="1">Involved in iron-sulfur cluster biogenesis. Binds a 4Fe-4S cluster, can transfer this cluster to apoproteins, and thereby intervenes in the maturation of Fe/S proteins. Could also act as a scaffold/chaperone for damaged Fe/S proteins.</text>
</comment>
<comment type="cofactor">
    <cofactor evidence="1">
        <name>[4Fe-4S] cluster</name>
        <dbReference type="ChEBI" id="CHEBI:49883"/>
    </cofactor>
    <text evidence="1">Binds 1 [4Fe-4S] cluster per subunit. The cluster is presumably bound at the interface of two monomers.</text>
</comment>
<comment type="subunit">
    <text evidence="1">Homodimer.</text>
</comment>
<comment type="similarity">
    <text evidence="1">Belongs to the NfuA family.</text>
</comment>
<organism>
    <name type="scientific">Pseudomonas putida (strain GB-1)</name>
    <dbReference type="NCBI Taxonomy" id="76869"/>
    <lineage>
        <taxon>Bacteria</taxon>
        <taxon>Pseudomonadati</taxon>
        <taxon>Pseudomonadota</taxon>
        <taxon>Gammaproteobacteria</taxon>
        <taxon>Pseudomonadales</taxon>
        <taxon>Pseudomonadaceae</taxon>
        <taxon>Pseudomonas</taxon>
    </lineage>
</organism>
<accession>B0KKI2</accession>
<dbReference type="EMBL" id="CP000926">
    <property type="protein sequence ID" value="ABY97888.1"/>
    <property type="molecule type" value="Genomic_DNA"/>
</dbReference>
<dbReference type="RefSeq" id="WP_012271640.1">
    <property type="nucleotide sequence ID" value="NC_010322.1"/>
</dbReference>
<dbReference type="SMR" id="B0KKI2"/>
<dbReference type="KEGG" id="ppg:PputGB1_1985"/>
<dbReference type="eggNOG" id="COG0316">
    <property type="taxonomic scope" value="Bacteria"/>
</dbReference>
<dbReference type="eggNOG" id="COG0694">
    <property type="taxonomic scope" value="Bacteria"/>
</dbReference>
<dbReference type="HOGENOM" id="CLU_094569_0_0_6"/>
<dbReference type="Proteomes" id="UP000002157">
    <property type="component" value="Chromosome"/>
</dbReference>
<dbReference type="GO" id="GO:0051539">
    <property type="term" value="F:4 iron, 4 sulfur cluster binding"/>
    <property type="evidence" value="ECO:0007669"/>
    <property type="project" value="UniProtKB-UniRule"/>
</dbReference>
<dbReference type="GO" id="GO:0005506">
    <property type="term" value="F:iron ion binding"/>
    <property type="evidence" value="ECO:0007669"/>
    <property type="project" value="InterPro"/>
</dbReference>
<dbReference type="GO" id="GO:0016226">
    <property type="term" value="P:iron-sulfur cluster assembly"/>
    <property type="evidence" value="ECO:0007669"/>
    <property type="project" value="UniProtKB-UniRule"/>
</dbReference>
<dbReference type="GO" id="GO:0051604">
    <property type="term" value="P:protein maturation"/>
    <property type="evidence" value="ECO:0007669"/>
    <property type="project" value="UniProtKB-UniRule"/>
</dbReference>
<dbReference type="Gene3D" id="3.30.300.130">
    <property type="entry name" value="Fe-S cluster assembly (FSCA)"/>
    <property type="match status" value="1"/>
</dbReference>
<dbReference type="Gene3D" id="2.60.300.12">
    <property type="entry name" value="HesB-like domain"/>
    <property type="match status" value="1"/>
</dbReference>
<dbReference type="HAMAP" id="MF_01637">
    <property type="entry name" value="Fe_S_biogen_NfuA"/>
    <property type="match status" value="1"/>
</dbReference>
<dbReference type="InterPro" id="IPR017726">
    <property type="entry name" value="Fe/S_biogenesis_protein_NfuA"/>
</dbReference>
<dbReference type="InterPro" id="IPR000361">
    <property type="entry name" value="FeS_biogenesis"/>
</dbReference>
<dbReference type="InterPro" id="IPR034904">
    <property type="entry name" value="FSCA_dom_sf"/>
</dbReference>
<dbReference type="InterPro" id="IPR035903">
    <property type="entry name" value="HesB-like_dom_sf"/>
</dbReference>
<dbReference type="InterPro" id="IPR001075">
    <property type="entry name" value="NIF_FeS_clus_asmbl_NifU_C"/>
</dbReference>
<dbReference type="NCBIfam" id="TIGR03341">
    <property type="entry name" value="YhgI_GntY"/>
    <property type="match status" value="1"/>
</dbReference>
<dbReference type="PANTHER" id="PTHR11178:SF51">
    <property type="entry name" value="FE_S BIOGENESIS PROTEIN NFUA"/>
    <property type="match status" value="1"/>
</dbReference>
<dbReference type="PANTHER" id="PTHR11178">
    <property type="entry name" value="IRON-SULFUR CLUSTER SCAFFOLD PROTEIN NFU-RELATED"/>
    <property type="match status" value="1"/>
</dbReference>
<dbReference type="Pfam" id="PF01521">
    <property type="entry name" value="Fe-S_biosyn"/>
    <property type="match status" value="1"/>
</dbReference>
<dbReference type="Pfam" id="PF01106">
    <property type="entry name" value="NifU"/>
    <property type="match status" value="1"/>
</dbReference>
<dbReference type="SUPFAM" id="SSF117916">
    <property type="entry name" value="Fe-S cluster assembly (FSCA) domain-like"/>
    <property type="match status" value="1"/>
</dbReference>
<dbReference type="SUPFAM" id="SSF89360">
    <property type="entry name" value="HesB-like domain"/>
    <property type="match status" value="1"/>
</dbReference>
<keyword id="KW-0004">4Fe-4S</keyword>
<keyword id="KW-0408">Iron</keyword>
<keyword id="KW-0411">Iron-sulfur</keyword>
<keyword id="KW-0479">Metal-binding</keyword>
<reference key="1">
    <citation type="submission" date="2008-01" db="EMBL/GenBank/DDBJ databases">
        <title>Complete sequence of Pseudomonas putida GB-1.</title>
        <authorList>
            <consortium name="US DOE Joint Genome Institute"/>
            <person name="Copeland A."/>
            <person name="Lucas S."/>
            <person name="Lapidus A."/>
            <person name="Barry K."/>
            <person name="Glavina del Rio T."/>
            <person name="Dalin E."/>
            <person name="Tice H."/>
            <person name="Pitluck S."/>
            <person name="Bruce D."/>
            <person name="Goodwin L."/>
            <person name="Chertkov O."/>
            <person name="Brettin T."/>
            <person name="Detter J.C."/>
            <person name="Han C."/>
            <person name="Kuske C.R."/>
            <person name="Schmutz J."/>
            <person name="Larimer F."/>
            <person name="Land M."/>
            <person name="Hauser L."/>
            <person name="Kyrpides N."/>
            <person name="Kim E."/>
            <person name="McCarthy J.K."/>
            <person name="Richardson P."/>
        </authorList>
    </citation>
    <scope>NUCLEOTIDE SEQUENCE [LARGE SCALE GENOMIC DNA]</scope>
    <source>
        <strain>GB-1</strain>
    </source>
</reference>
<feature type="chain" id="PRO_1000186765" description="Fe/S biogenesis protein NfuA">
    <location>
        <begin position="1"/>
        <end position="194"/>
    </location>
</feature>
<feature type="binding site" evidence="1">
    <location>
        <position position="152"/>
    </location>
    <ligand>
        <name>[4Fe-4S] cluster</name>
        <dbReference type="ChEBI" id="CHEBI:49883"/>
    </ligand>
</feature>
<feature type="binding site" evidence="1">
    <location>
        <position position="155"/>
    </location>
    <ligand>
        <name>[4Fe-4S] cluster</name>
        <dbReference type="ChEBI" id="CHEBI:49883"/>
    </ligand>
</feature>